<keyword id="KW-0997">Cell inner membrane</keyword>
<keyword id="KW-1003">Cell membrane</keyword>
<keyword id="KW-0350">Heme biosynthesis</keyword>
<keyword id="KW-0472">Membrane</keyword>
<keyword id="KW-0808">Transferase</keyword>
<keyword id="KW-0812">Transmembrane</keyword>
<keyword id="KW-1133">Transmembrane helix</keyword>
<dbReference type="EC" id="2.5.1.141" evidence="1"/>
<dbReference type="EMBL" id="CP000749">
    <property type="protein sequence ID" value="ABR69035.1"/>
    <property type="molecule type" value="Genomic_DNA"/>
</dbReference>
<dbReference type="SMR" id="A6VRF6"/>
<dbReference type="STRING" id="400668.Mmwyl1_0093"/>
<dbReference type="KEGG" id="mmw:Mmwyl1_0093"/>
<dbReference type="eggNOG" id="COG0109">
    <property type="taxonomic scope" value="Bacteria"/>
</dbReference>
<dbReference type="HOGENOM" id="CLU_029631_0_0_6"/>
<dbReference type="OrthoDB" id="9814417at2"/>
<dbReference type="UniPathway" id="UPA00834">
    <property type="reaction ID" value="UER00712"/>
</dbReference>
<dbReference type="GO" id="GO:0005886">
    <property type="term" value="C:plasma membrane"/>
    <property type="evidence" value="ECO:0007669"/>
    <property type="project" value="UniProtKB-SubCell"/>
</dbReference>
<dbReference type="GO" id="GO:0008495">
    <property type="term" value="F:protoheme IX farnesyltransferase activity"/>
    <property type="evidence" value="ECO:0007669"/>
    <property type="project" value="UniProtKB-UniRule"/>
</dbReference>
<dbReference type="GO" id="GO:0048034">
    <property type="term" value="P:heme O biosynthetic process"/>
    <property type="evidence" value="ECO:0007669"/>
    <property type="project" value="UniProtKB-UniRule"/>
</dbReference>
<dbReference type="CDD" id="cd13957">
    <property type="entry name" value="PT_UbiA_Cox10"/>
    <property type="match status" value="1"/>
</dbReference>
<dbReference type="FunFam" id="1.10.357.140:FF:000001">
    <property type="entry name" value="Protoheme IX farnesyltransferase"/>
    <property type="match status" value="1"/>
</dbReference>
<dbReference type="Gene3D" id="1.10.357.140">
    <property type="entry name" value="UbiA prenyltransferase"/>
    <property type="match status" value="1"/>
</dbReference>
<dbReference type="HAMAP" id="MF_00154">
    <property type="entry name" value="CyoE_CtaB"/>
    <property type="match status" value="1"/>
</dbReference>
<dbReference type="InterPro" id="IPR006369">
    <property type="entry name" value="Protohaem_IX_farnesylTrfase"/>
</dbReference>
<dbReference type="InterPro" id="IPR000537">
    <property type="entry name" value="UbiA_prenyltransferase"/>
</dbReference>
<dbReference type="InterPro" id="IPR030470">
    <property type="entry name" value="UbiA_prenylTrfase_CS"/>
</dbReference>
<dbReference type="InterPro" id="IPR044878">
    <property type="entry name" value="UbiA_sf"/>
</dbReference>
<dbReference type="NCBIfam" id="TIGR01473">
    <property type="entry name" value="cyoE_ctaB"/>
    <property type="match status" value="1"/>
</dbReference>
<dbReference type="NCBIfam" id="NF003348">
    <property type="entry name" value="PRK04375.1-1"/>
    <property type="match status" value="1"/>
</dbReference>
<dbReference type="PANTHER" id="PTHR43448">
    <property type="entry name" value="PROTOHEME IX FARNESYLTRANSFERASE, MITOCHONDRIAL"/>
    <property type="match status" value="1"/>
</dbReference>
<dbReference type="PANTHER" id="PTHR43448:SF2">
    <property type="entry name" value="PROTOHEME IX FARNESYLTRANSFERASE, MITOCHONDRIAL"/>
    <property type="match status" value="1"/>
</dbReference>
<dbReference type="Pfam" id="PF01040">
    <property type="entry name" value="UbiA"/>
    <property type="match status" value="1"/>
</dbReference>
<dbReference type="PROSITE" id="PS00943">
    <property type="entry name" value="UBIA"/>
    <property type="match status" value="1"/>
</dbReference>
<organism>
    <name type="scientific">Marinomonas sp. (strain MWYL1)</name>
    <dbReference type="NCBI Taxonomy" id="400668"/>
    <lineage>
        <taxon>Bacteria</taxon>
        <taxon>Pseudomonadati</taxon>
        <taxon>Pseudomonadota</taxon>
        <taxon>Gammaproteobacteria</taxon>
        <taxon>Oceanospirillales</taxon>
        <taxon>Oceanospirillaceae</taxon>
        <taxon>Marinomonas</taxon>
    </lineage>
</organism>
<proteinExistence type="inferred from homology"/>
<gene>
    <name evidence="1" type="primary">cyoE</name>
    <name type="ordered locus">Mmwyl1_0093</name>
</gene>
<name>CYOE_MARMS</name>
<comment type="function">
    <text evidence="1">Converts heme B (protoheme IX) to heme O by substitution of the vinyl group on carbon 2 of heme B porphyrin ring with a hydroxyethyl farnesyl side group.</text>
</comment>
<comment type="catalytic activity">
    <reaction evidence="1">
        <text>heme b + (2E,6E)-farnesyl diphosphate + H2O = Fe(II)-heme o + diphosphate</text>
        <dbReference type="Rhea" id="RHEA:28070"/>
        <dbReference type="ChEBI" id="CHEBI:15377"/>
        <dbReference type="ChEBI" id="CHEBI:33019"/>
        <dbReference type="ChEBI" id="CHEBI:60344"/>
        <dbReference type="ChEBI" id="CHEBI:60530"/>
        <dbReference type="ChEBI" id="CHEBI:175763"/>
        <dbReference type="EC" id="2.5.1.141"/>
    </reaction>
</comment>
<comment type="pathway">
    <text evidence="1">Porphyrin-containing compound metabolism; heme O biosynthesis; heme O from protoheme: step 1/1.</text>
</comment>
<comment type="subcellular location">
    <subcellularLocation>
        <location evidence="1">Cell inner membrane</location>
        <topology evidence="1">Multi-pass membrane protein</topology>
    </subcellularLocation>
</comment>
<comment type="miscellaneous">
    <text evidence="1">Carbon 2 of the heme B porphyrin ring is defined according to the Fischer nomenclature.</text>
</comment>
<comment type="similarity">
    <text evidence="1">Belongs to the UbiA prenyltransferase family. Protoheme IX farnesyltransferase subfamily.</text>
</comment>
<evidence type="ECO:0000255" key="1">
    <source>
        <dbReference type="HAMAP-Rule" id="MF_00154"/>
    </source>
</evidence>
<sequence>MFKRYLQVTKPGIIMGNLISVAGGFFLASRGEIDWILMLATVIGLSLVVASGCAINNYIDRDIDAKMQRTRNRVTVNGEMSGKAAFFHGIVLGVIGFALLSYFTNWVAVAFAAFGYVVYVGLYTMYFKRKSVYGTFVGSLSGAVPPVVGYCAAAGQFDAGAAILLTMFCIWQMPHSYAIAIFRYKDYEAAGIPVLPVSQGIAKAKRHIILHIAAFAVVAALLPLTGYVGIGFMVVALATSLWWLAMALRGYRPGIDVNGWARQVFFFSIITVTALSVTMALDFNEVSPNLLVFAAH</sequence>
<reference key="1">
    <citation type="submission" date="2007-06" db="EMBL/GenBank/DDBJ databases">
        <title>Complete sequence of Marinomonas sp. MWYL1.</title>
        <authorList>
            <consortium name="US DOE Joint Genome Institute"/>
            <person name="Copeland A."/>
            <person name="Lucas S."/>
            <person name="Lapidus A."/>
            <person name="Barry K."/>
            <person name="Glavina del Rio T."/>
            <person name="Dalin E."/>
            <person name="Tice H."/>
            <person name="Pitluck S."/>
            <person name="Kiss H."/>
            <person name="Brettin T."/>
            <person name="Bruce D."/>
            <person name="Detter J.C."/>
            <person name="Han C."/>
            <person name="Schmutz J."/>
            <person name="Larimer F."/>
            <person name="Land M."/>
            <person name="Hauser L."/>
            <person name="Kyrpides N."/>
            <person name="Kim E."/>
            <person name="Johnston A.W.B."/>
            <person name="Todd J.D."/>
            <person name="Rogers R."/>
            <person name="Wexler M."/>
            <person name="Bond P.L."/>
            <person name="Li Y."/>
            <person name="Richardson P."/>
        </authorList>
    </citation>
    <scope>NUCLEOTIDE SEQUENCE [LARGE SCALE GENOMIC DNA]</scope>
    <source>
        <strain>MWYL1</strain>
    </source>
</reference>
<feature type="chain" id="PRO_0000345999" description="Protoheme IX farnesyltransferase">
    <location>
        <begin position="1"/>
        <end position="296"/>
    </location>
</feature>
<feature type="transmembrane region" description="Helical" evidence="1">
    <location>
        <begin position="8"/>
        <end position="28"/>
    </location>
</feature>
<feature type="transmembrane region" description="Helical" evidence="1">
    <location>
        <begin position="35"/>
        <end position="55"/>
    </location>
</feature>
<feature type="transmembrane region" description="Helical" evidence="1">
    <location>
        <begin position="84"/>
        <end position="104"/>
    </location>
</feature>
<feature type="transmembrane region" description="Helical" evidence="1">
    <location>
        <begin position="107"/>
        <end position="127"/>
    </location>
</feature>
<feature type="transmembrane region" description="Helical" evidence="1">
    <location>
        <begin position="132"/>
        <end position="152"/>
    </location>
</feature>
<feature type="transmembrane region" description="Helical" evidence="1">
    <location>
        <begin position="162"/>
        <end position="182"/>
    </location>
</feature>
<feature type="transmembrane region" description="Helical" evidence="1">
    <location>
        <begin position="215"/>
        <end position="235"/>
    </location>
</feature>
<feature type="transmembrane region" description="Helical" evidence="1">
    <location>
        <begin position="264"/>
        <end position="284"/>
    </location>
</feature>
<accession>A6VRF6</accession>
<protein>
    <recommendedName>
        <fullName evidence="1">Protoheme IX farnesyltransferase</fullName>
        <ecNumber evidence="1">2.5.1.141</ecNumber>
    </recommendedName>
    <alternativeName>
        <fullName evidence="1">Heme B farnesyltransferase</fullName>
    </alternativeName>
    <alternativeName>
        <fullName evidence="1">Heme O synthase</fullName>
    </alternativeName>
</protein>